<protein>
    <recommendedName>
        <fullName evidence="1">tRNA(Met) cytidine acetate ligase</fullName>
        <ecNumber evidence="1">6.3.4.-</ecNumber>
    </recommendedName>
</protein>
<gene>
    <name evidence="1" type="primary">tmcAL</name>
    <name type="ordered locus">SSA_0583</name>
</gene>
<organism>
    <name type="scientific">Streptococcus sanguinis (strain SK36)</name>
    <dbReference type="NCBI Taxonomy" id="388919"/>
    <lineage>
        <taxon>Bacteria</taxon>
        <taxon>Bacillati</taxon>
        <taxon>Bacillota</taxon>
        <taxon>Bacilli</taxon>
        <taxon>Lactobacillales</taxon>
        <taxon>Streptococcaceae</taxon>
        <taxon>Streptococcus</taxon>
    </lineage>
</organism>
<comment type="function">
    <text evidence="1">Catalyzes the formation of N(4)-acetylcytidine (ac(4)C) at the wobble position of elongator tRNA(Met), using acetate and ATP as substrates. First activates an acetate ion to form acetyladenylate (Ac-AMP) and then transfers the acetyl group to tRNA to form ac(4)C34.</text>
</comment>
<comment type="catalytic activity">
    <reaction evidence="1">
        <text>cytidine(34) in elongator tRNA(Met) + acetate + ATP = N(4)-acetylcytidine(34) in elongator tRNA(Met) + AMP + diphosphate</text>
        <dbReference type="Rhea" id="RHEA:58144"/>
        <dbReference type="Rhea" id="RHEA-COMP:10693"/>
        <dbReference type="Rhea" id="RHEA-COMP:10694"/>
        <dbReference type="ChEBI" id="CHEBI:30089"/>
        <dbReference type="ChEBI" id="CHEBI:30616"/>
        <dbReference type="ChEBI" id="CHEBI:33019"/>
        <dbReference type="ChEBI" id="CHEBI:74900"/>
        <dbReference type="ChEBI" id="CHEBI:82748"/>
        <dbReference type="ChEBI" id="CHEBI:456215"/>
    </reaction>
</comment>
<comment type="subcellular location">
    <subcellularLocation>
        <location evidence="1">Cytoplasm</location>
    </subcellularLocation>
</comment>
<comment type="similarity">
    <text evidence="1">Belongs to the TmcAL family.</text>
</comment>
<accession>A3CLH1</accession>
<evidence type="ECO:0000255" key="1">
    <source>
        <dbReference type="HAMAP-Rule" id="MF_01539"/>
    </source>
</evidence>
<name>TMCAL_STRSV</name>
<proteinExistence type="inferred from homology"/>
<reference key="1">
    <citation type="journal article" date="2007" name="J. Bacteriol.">
        <title>Genome of the opportunistic pathogen Streptococcus sanguinis.</title>
        <authorList>
            <person name="Xu P."/>
            <person name="Alves J.M."/>
            <person name="Kitten T."/>
            <person name="Brown A."/>
            <person name="Chen Z."/>
            <person name="Ozaki L.S."/>
            <person name="Manque P."/>
            <person name="Ge X."/>
            <person name="Serrano M.G."/>
            <person name="Puiu D."/>
            <person name="Hendricks S."/>
            <person name="Wang Y."/>
            <person name="Chaplin M.D."/>
            <person name="Akan D."/>
            <person name="Paik S."/>
            <person name="Peterson D.L."/>
            <person name="Macrina F.L."/>
            <person name="Buck G.A."/>
        </authorList>
    </citation>
    <scope>NUCLEOTIDE SEQUENCE [LARGE SCALE GENOMIC DNA]</scope>
    <source>
        <strain>SK36</strain>
    </source>
</reference>
<keyword id="KW-0067">ATP-binding</keyword>
<keyword id="KW-0963">Cytoplasm</keyword>
<keyword id="KW-0436">Ligase</keyword>
<keyword id="KW-0547">Nucleotide-binding</keyword>
<keyword id="KW-1185">Reference proteome</keyword>
<keyword id="KW-0694">RNA-binding</keyword>
<keyword id="KW-0819">tRNA processing</keyword>
<keyword id="KW-0820">tRNA-binding</keyword>
<sequence length="364" mass="40686">MTVTGIIAEFNPFHNGHKYLLEQASGLKIIAMSGNFVQRGEPAIVDKWTRAQMALEAGADLVLELPFLVSVQAADFFAKGAVDILERLGIDYLMFGTEEVLDYESISKVYGEKAEQMEAYLAGLPDSLSYPQKTQAMWQEFAGLNFSGSTPNHILGLAYAKAVAGRDIKLCSIQRQGAGYHSLSANQEFASATALRQNLDQPDFLKKFTPAHHLLETAPKVIWSDLFSYLRYQIVTCPDLTNFYQVNQELAVRIRVALKSSETIEELVEQVATKRYTKARVRRLLTYILVGARQEELPSGVHILGFSEQGRQHLSQLKGKVELVSRIGKDPWDSLTQQADKVYQLGNPALREQNFGRVPIMKGK</sequence>
<dbReference type="EC" id="6.3.4.-" evidence="1"/>
<dbReference type="EMBL" id="CP000387">
    <property type="protein sequence ID" value="ABN44026.1"/>
    <property type="molecule type" value="Genomic_DNA"/>
</dbReference>
<dbReference type="RefSeq" id="WP_011836606.1">
    <property type="nucleotide sequence ID" value="NC_009009.1"/>
</dbReference>
<dbReference type="RefSeq" id="YP_001034576.1">
    <property type="nucleotide sequence ID" value="NC_009009.1"/>
</dbReference>
<dbReference type="SMR" id="A3CLH1"/>
<dbReference type="STRING" id="388919.SSA_0583"/>
<dbReference type="KEGG" id="ssa:SSA_0583"/>
<dbReference type="PATRIC" id="fig|388919.9.peg.563"/>
<dbReference type="eggNOG" id="COG1323">
    <property type="taxonomic scope" value="Bacteria"/>
</dbReference>
<dbReference type="HOGENOM" id="CLU_038915_0_2_9"/>
<dbReference type="OrthoDB" id="9769796at2"/>
<dbReference type="Proteomes" id="UP000002148">
    <property type="component" value="Chromosome"/>
</dbReference>
<dbReference type="GO" id="GO:0005737">
    <property type="term" value="C:cytoplasm"/>
    <property type="evidence" value="ECO:0007669"/>
    <property type="project" value="UniProtKB-SubCell"/>
</dbReference>
<dbReference type="GO" id="GO:0005524">
    <property type="term" value="F:ATP binding"/>
    <property type="evidence" value="ECO:0007669"/>
    <property type="project" value="UniProtKB-KW"/>
</dbReference>
<dbReference type="GO" id="GO:0016879">
    <property type="term" value="F:ligase activity, forming carbon-nitrogen bonds"/>
    <property type="evidence" value="ECO:0007669"/>
    <property type="project" value="UniProtKB-UniRule"/>
</dbReference>
<dbReference type="GO" id="GO:0000049">
    <property type="term" value="F:tRNA binding"/>
    <property type="evidence" value="ECO:0007669"/>
    <property type="project" value="UniProtKB-KW"/>
</dbReference>
<dbReference type="GO" id="GO:0006400">
    <property type="term" value="P:tRNA modification"/>
    <property type="evidence" value="ECO:0007669"/>
    <property type="project" value="UniProtKB-UniRule"/>
</dbReference>
<dbReference type="Gene3D" id="3.40.50.620">
    <property type="entry name" value="HUPs"/>
    <property type="match status" value="1"/>
</dbReference>
<dbReference type="HAMAP" id="MF_01539">
    <property type="entry name" value="TmcAL"/>
    <property type="match status" value="1"/>
</dbReference>
<dbReference type="InterPro" id="IPR014729">
    <property type="entry name" value="Rossmann-like_a/b/a_fold"/>
</dbReference>
<dbReference type="InterPro" id="IPR008513">
    <property type="entry name" value="tRNA(Met)_cyd_acetate_ligase"/>
</dbReference>
<dbReference type="NCBIfam" id="NF010191">
    <property type="entry name" value="PRK13670.1"/>
    <property type="match status" value="1"/>
</dbReference>
<dbReference type="PANTHER" id="PTHR37825">
    <property type="entry name" value="TRNA(MET) CYTIDINE ACETATE LIGASE"/>
    <property type="match status" value="1"/>
</dbReference>
<dbReference type="PANTHER" id="PTHR37825:SF1">
    <property type="entry name" value="TRNA(MET) CYTIDINE ACETATE LIGASE"/>
    <property type="match status" value="1"/>
</dbReference>
<dbReference type="Pfam" id="PF05636">
    <property type="entry name" value="HIGH_NTase1"/>
    <property type="match status" value="1"/>
</dbReference>
<dbReference type="SUPFAM" id="SSF52374">
    <property type="entry name" value="Nucleotidylyl transferase"/>
    <property type="match status" value="1"/>
</dbReference>
<feature type="chain" id="PRO_0000300200" description="tRNA(Met) cytidine acetate ligase">
    <location>
        <begin position="1"/>
        <end position="364"/>
    </location>
</feature>
<feature type="binding site" evidence="1">
    <location>
        <begin position="7"/>
        <end position="20"/>
    </location>
    <ligand>
        <name>ATP</name>
        <dbReference type="ChEBI" id="CHEBI:30616"/>
    </ligand>
</feature>
<feature type="binding site" evidence="1">
    <location>
        <position position="96"/>
    </location>
    <ligand>
        <name>ATP</name>
        <dbReference type="ChEBI" id="CHEBI:30616"/>
    </ligand>
</feature>
<feature type="binding site" evidence="1">
    <location>
        <position position="152"/>
    </location>
    <ligand>
        <name>ATP</name>
        <dbReference type="ChEBI" id="CHEBI:30616"/>
    </ligand>
</feature>
<feature type="binding site" evidence="1">
    <location>
        <position position="175"/>
    </location>
    <ligand>
        <name>ATP</name>
        <dbReference type="ChEBI" id="CHEBI:30616"/>
    </ligand>
</feature>